<reference key="1">
    <citation type="journal article" date="2005" name="BMC Genomics">
        <title>Characterization of 954 bovine full-CDS cDNA sequences.</title>
        <authorList>
            <person name="Harhay G.P."/>
            <person name="Sonstegard T.S."/>
            <person name="Keele J.W."/>
            <person name="Heaton M.P."/>
            <person name="Clawson M.L."/>
            <person name="Snelling W.M."/>
            <person name="Wiedmann R.T."/>
            <person name="Van Tassell C.P."/>
            <person name="Smith T.P.L."/>
        </authorList>
    </citation>
    <scope>NUCLEOTIDE SEQUENCE [LARGE SCALE MRNA]</scope>
</reference>
<reference key="2">
    <citation type="submission" date="2005-10" db="EMBL/GenBank/DDBJ databases">
        <authorList>
            <consortium name="NIH - Mammalian Gene Collection (MGC) project"/>
        </authorList>
    </citation>
    <scope>NUCLEOTIDE SEQUENCE [LARGE SCALE MRNA]</scope>
    <source>
        <strain>Crossbred X Angus</strain>
        <tissue>Liver</tissue>
    </source>
</reference>
<gene>
    <name type="primary">LEPROTL1</name>
</gene>
<keyword id="KW-0472">Membrane</keyword>
<keyword id="KW-1185">Reference proteome</keyword>
<keyword id="KW-0812">Transmembrane</keyword>
<keyword id="KW-1133">Transmembrane helix</keyword>
<proteinExistence type="evidence at transcript level"/>
<dbReference type="EMBL" id="BT025351">
    <property type="protein sequence ID" value="ABF57307.1"/>
    <property type="molecule type" value="mRNA"/>
</dbReference>
<dbReference type="EMBL" id="BC108155">
    <property type="protein sequence ID" value="AAI08156.1"/>
    <property type="molecule type" value="mRNA"/>
</dbReference>
<dbReference type="RefSeq" id="NP_001032539.1">
    <property type="nucleotide sequence ID" value="NM_001037462.2"/>
</dbReference>
<dbReference type="SMR" id="Q32PD8"/>
<dbReference type="FunCoup" id="Q32PD8">
    <property type="interactions" value="4396"/>
</dbReference>
<dbReference type="STRING" id="9913.ENSBTAP00000073949"/>
<dbReference type="PaxDb" id="9913-ENSBTAP00000045064"/>
<dbReference type="Ensembl" id="ENSBTAT00000047911.3">
    <property type="protein sequence ID" value="ENSBTAP00000045064.1"/>
    <property type="gene ID" value="ENSBTAG00000013581.7"/>
</dbReference>
<dbReference type="GeneID" id="513036"/>
<dbReference type="KEGG" id="bta:513036"/>
<dbReference type="CTD" id="23484"/>
<dbReference type="VEuPathDB" id="HostDB:ENSBTAG00000013581"/>
<dbReference type="VGNC" id="VGNC:30845">
    <property type="gene designation" value="LEPROTL1"/>
</dbReference>
<dbReference type="eggNOG" id="KOG2174">
    <property type="taxonomic scope" value="Eukaryota"/>
</dbReference>
<dbReference type="GeneTree" id="ENSGT00390000006503"/>
<dbReference type="HOGENOM" id="CLU_134810_2_2_1"/>
<dbReference type="InParanoid" id="Q32PD8"/>
<dbReference type="OMA" id="ICARCAN"/>
<dbReference type="OrthoDB" id="14246at2759"/>
<dbReference type="TreeFam" id="TF313689"/>
<dbReference type="Proteomes" id="UP000009136">
    <property type="component" value="Chromosome 27"/>
</dbReference>
<dbReference type="Bgee" id="ENSBTAG00000013581">
    <property type="expression patterns" value="Expressed in diaphragm and 104 other cell types or tissues"/>
</dbReference>
<dbReference type="GO" id="GO:0005768">
    <property type="term" value="C:endosome"/>
    <property type="evidence" value="ECO:0000318"/>
    <property type="project" value="GO_Central"/>
</dbReference>
<dbReference type="GO" id="GO:0016020">
    <property type="term" value="C:membrane"/>
    <property type="evidence" value="ECO:0007669"/>
    <property type="project" value="UniProtKB-SubCell"/>
</dbReference>
<dbReference type="GO" id="GO:0032511">
    <property type="term" value="P:late endosome to vacuole transport via multivesicular body sorting pathway"/>
    <property type="evidence" value="ECO:0000318"/>
    <property type="project" value="GO_Central"/>
</dbReference>
<dbReference type="GO" id="GO:0060400">
    <property type="term" value="P:negative regulation of growth hormone receptor signaling pathway"/>
    <property type="evidence" value="ECO:0000318"/>
    <property type="project" value="GO_Central"/>
</dbReference>
<dbReference type="InterPro" id="IPR007262">
    <property type="entry name" value="Vps55/LEPROT"/>
</dbReference>
<dbReference type="PANTHER" id="PTHR12050:SF4">
    <property type="entry name" value="LEPTIN RECEPTOR OVERLAPPING TRANSCRIPT-LIKE 1"/>
    <property type="match status" value="1"/>
</dbReference>
<dbReference type="PANTHER" id="PTHR12050">
    <property type="entry name" value="LEPTIN RECEPTOR-RELATED"/>
    <property type="match status" value="1"/>
</dbReference>
<dbReference type="Pfam" id="PF04133">
    <property type="entry name" value="Vps55"/>
    <property type="match status" value="1"/>
</dbReference>
<accession>Q32PD8</accession>
<comment type="function">
    <text evidence="1">Negatively regulates growth hormone (GH) receptor cell surface expression in liver. May play a role in liver resistance to GH during periods of reduced nutrient availability (By similarity).</text>
</comment>
<comment type="subcellular location">
    <subcellularLocation>
        <location evidence="3">Membrane</location>
        <topology evidence="3">Multi-pass membrane protein</topology>
    </subcellularLocation>
</comment>
<comment type="similarity">
    <text evidence="3">Belongs to the OB-RGRP/VPS55 family.</text>
</comment>
<organism>
    <name type="scientific">Bos taurus</name>
    <name type="common">Bovine</name>
    <dbReference type="NCBI Taxonomy" id="9913"/>
    <lineage>
        <taxon>Eukaryota</taxon>
        <taxon>Metazoa</taxon>
        <taxon>Chordata</taxon>
        <taxon>Craniata</taxon>
        <taxon>Vertebrata</taxon>
        <taxon>Euteleostomi</taxon>
        <taxon>Mammalia</taxon>
        <taxon>Eutheria</taxon>
        <taxon>Laurasiatheria</taxon>
        <taxon>Artiodactyla</taxon>
        <taxon>Ruminantia</taxon>
        <taxon>Pecora</taxon>
        <taxon>Bovidae</taxon>
        <taxon>Bovinae</taxon>
        <taxon>Bos</taxon>
    </lineage>
</organism>
<protein>
    <recommendedName>
        <fullName>Leptin receptor overlapping transcript-like 1</fullName>
    </recommendedName>
</protein>
<name>LERL1_BOVIN</name>
<sequence>MAGIKALISLSFGGAIGLMFLMLGCALPIYNQYWPLFVLFFYILSPIPYCIARRLVDDTDAMSNACKELAIFLTTGIVVSAFGLPIVFARANLIEWGACALVLTGNTVIFATILGFFLVFGSNDDFSWQQW</sequence>
<feature type="chain" id="PRO_0000327389" description="Leptin receptor overlapping transcript-like 1">
    <location>
        <begin position="1"/>
        <end position="131"/>
    </location>
</feature>
<feature type="transmembrane region" description="Helical" evidence="2">
    <location>
        <begin position="7"/>
        <end position="27"/>
    </location>
</feature>
<feature type="transmembrane region" description="Helical" evidence="2">
    <location>
        <begin position="32"/>
        <end position="52"/>
    </location>
</feature>
<feature type="transmembrane region" description="Helical" evidence="2">
    <location>
        <begin position="69"/>
        <end position="89"/>
    </location>
</feature>
<feature type="transmembrane region" description="Helical" evidence="2">
    <location>
        <begin position="100"/>
        <end position="120"/>
    </location>
</feature>
<evidence type="ECO:0000250" key="1"/>
<evidence type="ECO:0000255" key="2"/>
<evidence type="ECO:0000305" key="3"/>